<reference key="1">
    <citation type="journal article" date="2007" name="Science">
        <title>The Fusarium graminearum genome reveals a link between localized polymorphism and pathogen specialization.</title>
        <authorList>
            <person name="Cuomo C.A."/>
            <person name="Gueldener U."/>
            <person name="Xu J.-R."/>
            <person name="Trail F."/>
            <person name="Turgeon B.G."/>
            <person name="Di Pietro A."/>
            <person name="Walton J.D."/>
            <person name="Ma L.-J."/>
            <person name="Baker S.E."/>
            <person name="Rep M."/>
            <person name="Adam G."/>
            <person name="Antoniw J."/>
            <person name="Baldwin T."/>
            <person name="Calvo S.E."/>
            <person name="Chang Y.-L."/>
            <person name="DeCaprio D."/>
            <person name="Gale L.R."/>
            <person name="Gnerre S."/>
            <person name="Goswami R.S."/>
            <person name="Hammond-Kosack K."/>
            <person name="Harris L.J."/>
            <person name="Hilburn K."/>
            <person name="Kennell J.C."/>
            <person name="Kroken S."/>
            <person name="Magnuson J.K."/>
            <person name="Mannhaupt G."/>
            <person name="Mauceli E.W."/>
            <person name="Mewes H.-W."/>
            <person name="Mitterbauer R."/>
            <person name="Muehlbauer G."/>
            <person name="Muensterkoetter M."/>
            <person name="Nelson D."/>
            <person name="O'Donnell K."/>
            <person name="Ouellet T."/>
            <person name="Qi W."/>
            <person name="Quesneville H."/>
            <person name="Roncero M.I.G."/>
            <person name="Seong K.-Y."/>
            <person name="Tetko I.V."/>
            <person name="Urban M."/>
            <person name="Waalwijk C."/>
            <person name="Ward T.J."/>
            <person name="Yao J."/>
            <person name="Birren B.W."/>
            <person name="Kistler H.C."/>
        </authorList>
    </citation>
    <scope>NUCLEOTIDE SEQUENCE [LARGE SCALE GENOMIC DNA]</scope>
    <source>
        <strain>ATCC MYA-4620 / CBS 123657 / FGSC 9075 / NRRL 31084 / PH-1</strain>
    </source>
</reference>
<reference key="2">
    <citation type="journal article" date="2010" name="Nature">
        <title>Comparative genomics reveals mobile pathogenicity chromosomes in Fusarium.</title>
        <authorList>
            <person name="Ma L.-J."/>
            <person name="van der Does H.C."/>
            <person name="Borkovich K.A."/>
            <person name="Coleman J.J."/>
            <person name="Daboussi M.-J."/>
            <person name="Di Pietro A."/>
            <person name="Dufresne M."/>
            <person name="Freitag M."/>
            <person name="Grabherr M."/>
            <person name="Henrissat B."/>
            <person name="Houterman P.M."/>
            <person name="Kang S."/>
            <person name="Shim W.-B."/>
            <person name="Woloshuk C."/>
            <person name="Xie X."/>
            <person name="Xu J.-R."/>
            <person name="Antoniw J."/>
            <person name="Baker S.E."/>
            <person name="Bluhm B.H."/>
            <person name="Breakspear A."/>
            <person name="Brown D.W."/>
            <person name="Butchko R.A.E."/>
            <person name="Chapman S."/>
            <person name="Coulson R."/>
            <person name="Coutinho P.M."/>
            <person name="Danchin E.G.J."/>
            <person name="Diener A."/>
            <person name="Gale L.R."/>
            <person name="Gardiner D.M."/>
            <person name="Goff S."/>
            <person name="Hammond-Kosack K.E."/>
            <person name="Hilburn K."/>
            <person name="Hua-Van A."/>
            <person name="Jonkers W."/>
            <person name="Kazan K."/>
            <person name="Kodira C.D."/>
            <person name="Koehrsen M."/>
            <person name="Kumar L."/>
            <person name="Lee Y.-H."/>
            <person name="Li L."/>
            <person name="Manners J.M."/>
            <person name="Miranda-Saavedra D."/>
            <person name="Mukherjee M."/>
            <person name="Park G."/>
            <person name="Park J."/>
            <person name="Park S.-Y."/>
            <person name="Proctor R.H."/>
            <person name="Regev A."/>
            <person name="Ruiz-Roldan M.C."/>
            <person name="Sain D."/>
            <person name="Sakthikumar S."/>
            <person name="Sykes S."/>
            <person name="Schwartz D.C."/>
            <person name="Turgeon B.G."/>
            <person name="Wapinski I."/>
            <person name="Yoder O."/>
            <person name="Young S."/>
            <person name="Zeng Q."/>
            <person name="Zhou S."/>
            <person name="Galagan J."/>
            <person name="Cuomo C.A."/>
            <person name="Kistler H.C."/>
            <person name="Rep M."/>
        </authorList>
    </citation>
    <scope>GENOME REANNOTATION</scope>
    <source>
        <strain>ATCC MYA-4620 / CBS 123657 / FGSC 9075 / NRRL 31084 / PH-1</strain>
    </source>
</reference>
<reference key="3">
    <citation type="journal article" date="2015" name="BMC Genomics">
        <title>The completed genome sequence of the pathogenic ascomycete fungus Fusarium graminearum.</title>
        <authorList>
            <person name="King R."/>
            <person name="Urban M."/>
            <person name="Hammond-Kosack M.C.U."/>
            <person name="Hassani-Pak K."/>
            <person name="Hammond-Kosack K.E."/>
        </authorList>
    </citation>
    <scope>NUCLEOTIDE SEQUENCE [LARGE SCALE GENOMIC DNA]</scope>
    <source>
        <strain>ATCC MYA-4620 / CBS 123657 / FGSC 9075 / NRRL 31084 / PH-1</strain>
    </source>
</reference>
<reference key="4">
    <citation type="journal article" date="2019" name="Nat. Commun.">
        <title>A phosphorylated transcription factor regulates sterol biosynthesis in Fusarium graminearum.</title>
        <authorList>
            <person name="Liu Z."/>
            <person name="Jian Y."/>
            <person name="Chen Y."/>
            <person name="Kistler H.C."/>
            <person name="He P."/>
            <person name="Ma Z."/>
            <person name="Yin Y."/>
        </authorList>
    </citation>
    <scope>FUNCTION</scope>
    <scope>INDUCTION</scope>
</reference>
<proteinExistence type="evidence at transcript level"/>
<comment type="function">
    <text evidence="3 8">Acetyl-CoA acetyltransferase; part of the first module of ergosterol biosynthesis pathway that includes the early steps of the pathway, conserved across all eukaryotes, and which results in the formation of mevalonate from acetyl-coenzyme A (acetyl-CoA) (By similarity). ERG10B catalyzes the formation of acetoacetyl-CoA from acetyl-CoA (By similarity). The first module starts with the action of the cytosolic acetyl-CoA acetyltransferase ERG10B that catalyzes the formation of acetoacetyl-CoA. The hydroxymethylglutaryl-CoA synthases ERG13 then condenses acetyl-CoA with acetoacetyl-CoA to form HMG-CoA. The rate-limiting step of the early module is the reduction to mevalonate by the 3-hydroxy-3-methylglutaryl-coenzyme A (HMG-CoA) reductases HMG1 (Probable).</text>
</comment>
<comment type="catalytic activity">
    <reaction evidence="4 8">
        <text>2 acetyl-CoA = acetoacetyl-CoA + CoA</text>
        <dbReference type="Rhea" id="RHEA:21036"/>
        <dbReference type="ChEBI" id="CHEBI:57286"/>
        <dbReference type="ChEBI" id="CHEBI:57287"/>
        <dbReference type="ChEBI" id="CHEBI:57288"/>
        <dbReference type="EC" id="2.3.1.9"/>
    </reaction>
</comment>
<comment type="cofactor">
    <cofactor evidence="3">
        <name>K(+)</name>
        <dbReference type="ChEBI" id="CHEBI:29103"/>
    </cofactor>
</comment>
<comment type="pathway">
    <text evidence="8">Metabolic intermediate biosynthesis; (R)-mevalonate biosynthesis; (R)-mevalonate from acetyl-CoA: step 1/3.</text>
</comment>
<comment type="subunit">
    <text evidence="2">Homotetramer.</text>
</comment>
<comment type="subcellular location">
    <subcellularLocation>
        <location evidence="7">Cytoplasm</location>
        <location evidence="7">Cytosol</location>
    </subcellularLocation>
</comment>
<comment type="induction">
    <text evidence="5">Expression is regulated by the Zn(2)-C6 fungal-type transcription factor FgSR which binds directly to the promoter.</text>
</comment>
<comment type="similarity">
    <text evidence="7">Belongs to the thiolase-like superfamily. Thiolase family.</text>
</comment>
<dbReference type="EC" id="2.3.1.9" evidence="8"/>
<dbReference type="EMBL" id="HG970335">
    <property type="protein sequence ID" value="CEF84991.1"/>
    <property type="molecule type" value="Genomic_DNA"/>
</dbReference>
<dbReference type="RefSeq" id="XP_011328435.1">
    <property type="nucleotide sequence ID" value="XM_011330133.1"/>
</dbReference>
<dbReference type="SMR" id="I1RY81"/>
<dbReference type="FunCoup" id="I1RY81">
    <property type="interactions" value="613"/>
</dbReference>
<dbReference type="STRING" id="229533.I1RY81"/>
<dbReference type="KEGG" id="fgr:FGSG_09321"/>
<dbReference type="VEuPathDB" id="FungiDB:FGRAMPH1_01G27377"/>
<dbReference type="eggNOG" id="KOG1390">
    <property type="taxonomic scope" value="Eukaryota"/>
</dbReference>
<dbReference type="HOGENOM" id="CLU_031026_0_1_1"/>
<dbReference type="InParanoid" id="I1RY81"/>
<dbReference type="OrthoDB" id="88408at110618"/>
<dbReference type="UniPathway" id="UPA00058">
    <property type="reaction ID" value="UER00101"/>
</dbReference>
<dbReference type="Proteomes" id="UP000070720">
    <property type="component" value="Chromosome 4"/>
</dbReference>
<dbReference type="GO" id="GO:0005829">
    <property type="term" value="C:cytosol"/>
    <property type="evidence" value="ECO:0007669"/>
    <property type="project" value="UniProtKB-SubCell"/>
</dbReference>
<dbReference type="GO" id="GO:0005739">
    <property type="term" value="C:mitochondrion"/>
    <property type="evidence" value="ECO:0007669"/>
    <property type="project" value="TreeGrafter"/>
</dbReference>
<dbReference type="GO" id="GO:0003985">
    <property type="term" value="F:acetyl-CoA C-acetyltransferase activity"/>
    <property type="evidence" value="ECO:0007669"/>
    <property type="project" value="TreeGrafter"/>
</dbReference>
<dbReference type="GO" id="GO:0046872">
    <property type="term" value="F:metal ion binding"/>
    <property type="evidence" value="ECO:0007669"/>
    <property type="project" value="UniProtKB-KW"/>
</dbReference>
<dbReference type="GO" id="GO:0006696">
    <property type="term" value="P:ergosterol biosynthetic process"/>
    <property type="evidence" value="ECO:0007669"/>
    <property type="project" value="TreeGrafter"/>
</dbReference>
<dbReference type="GO" id="GO:0006635">
    <property type="term" value="P:fatty acid beta-oxidation"/>
    <property type="evidence" value="ECO:0007669"/>
    <property type="project" value="TreeGrafter"/>
</dbReference>
<dbReference type="CDD" id="cd00751">
    <property type="entry name" value="thiolase"/>
    <property type="match status" value="1"/>
</dbReference>
<dbReference type="FunFam" id="3.40.47.10:FF:000007">
    <property type="entry name" value="acetyl-CoA acetyltransferase, mitochondrial"/>
    <property type="match status" value="1"/>
</dbReference>
<dbReference type="Gene3D" id="3.40.47.10">
    <property type="match status" value="1"/>
</dbReference>
<dbReference type="InterPro" id="IPR002155">
    <property type="entry name" value="Thiolase"/>
</dbReference>
<dbReference type="InterPro" id="IPR016039">
    <property type="entry name" value="Thiolase-like"/>
</dbReference>
<dbReference type="InterPro" id="IPR020615">
    <property type="entry name" value="Thiolase_acyl_enz_int_AS"/>
</dbReference>
<dbReference type="InterPro" id="IPR020610">
    <property type="entry name" value="Thiolase_AS"/>
</dbReference>
<dbReference type="InterPro" id="IPR020617">
    <property type="entry name" value="Thiolase_C"/>
</dbReference>
<dbReference type="InterPro" id="IPR020613">
    <property type="entry name" value="Thiolase_CS"/>
</dbReference>
<dbReference type="InterPro" id="IPR020616">
    <property type="entry name" value="Thiolase_N"/>
</dbReference>
<dbReference type="NCBIfam" id="TIGR01930">
    <property type="entry name" value="AcCoA-C-Actrans"/>
    <property type="match status" value="1"/>
</dbReference>
<dbReference type="PANTHER" id="PTHR18919:SF165">
    <property type="entry name" value="ACETYL-COA ACETYLTRANSFERASE"/>
    <property type="match status" value="1"/>
</dbReference>
<dbReference type="PANTHER" id="PTHR18919">
    <property type="entry name" value="ACETYL-COA C-ACYLTRANSFERASE"/>
    <property type="match status" value="1"/>
</dbReference>
<dbReference type="Pfam" id="PF02803">
    <property type="entry name" value="Thiolase_C"/>
    <property type="match status" value="1"/>
</dbReference>
<dbReference type="Pfam" id="PF00108">
    <property type="entry name" value="Thiolase_N"/>
    <property type="match status" value="1"/>
</dbReference>
<dbReference type="PIRSF" id="PIRSF000429">
    <property type="entry name" value="Ac-CoA_Ac_transf"/>
    <property type="match status" value="1"/>
</dbReference>
<dbReference type="SUPFAM" id="SSF53901">
    <property type="entry name" value="Thiolase-like"/>
    <property type="match status" value="2"/>
</dbReference>
<dbReference type="PROSITE" id="PS00098">
    <property type="entry name" value="THIOLASE_1"/>
    <property type="match status" value="1"/>
</dbReference>
<dbReference type="PROSITE" id="PS00737">
    <property type="entry name" value="THIOLASE_2"/>
    <property type="match status" value="1"/>
</dbReference>
<dbReference type="PROSITE" id="PS00099">
    <property type="entry name" value="THIOLASE_3"/>
    <property type="match status" value="1"/>
</dbReference>
<organism>
    <name type="scientific">Gibberella zeae (strain ATCC MYA-4620 / CBS 123657 / FGSC 9075 / NRRL 31084 / PH-1)</name>
    <name type="common">Wheat head blight fungus</name>
    <name type="synonym">Fusarium graminearum</name>
    <dbReference type="NCBI Taxonomy" id="229533"/>
    <lineage>
        <taxon>Eukaryota</taxon>
        <taxon>Fungi</taxon>
        <taxon>Dikarya</taxon>
        <taxon>Ascomycota</taxon>
        <taxon>Pezizomycotina</taxon>
        <taxon>Sordariomycetes</taxon>
        <taxon>Hypocreomycetidae</taxon>
        <taxon>Hypocreales</taxon>
        <taxon>Nectriaceae</taxon>
        <taxon>Fusarium</taxon>
    </lineage>
</organism>
<accession>I1RY81</accession>
<gene>
    <name evidence="6" type="primary">ERG10</name>
    <name type="ORF">FG09321</name>
    <name type="ORF">FGRAMPH1_01T27377</name>
</gene>
<feature type="chain" id="PRO_0000454670" description="Acetyl-CoA acetyltransferase ERG10, cytosolic">
    <location>
        <begin position="1"/>
        <end position="396"/>
    </location>
</feature>
<feature type="active site" description="Acyl-thioester intermediate" evidence="1">
    <location>
        <position position="91"/>
    </location>
</feature>
<feature type="active site" description="Proton acceptor" evidence="4">
    <location>
        <position position="351"/>
    </location>
</feature>
<feature type="active site" description="Proton acceptor" evidence="4">
    <location>
        <position position="381"/>
    </location>
</feature>
<feature type="binding site" evidence="3">
    <location>
        <position position="186"/>
    </location>
    <ligand>
        <name>K(+)</name>
        <dbReference type="ChEBI" id="CHEBI:29103"/>
    </ligand>
</feature>
<feature type="binding site" evidence="3">
    <location>
        <position position="227"/>
    </location>
    <ligand>
        <name>CoA</name>
        <dbReference type="ChEBI" id="CHEBI:57287"/>
    </ligand>
</feature>
<feature type="binding site" evidence="3">
    <location>
        <position position="230"/>
    </location>
    <ligand>
        <name>CoA</name>
        <dbReference type="ChEBI" id="CHEBI:57287"/>
    </ligand>
</feature>
<feature type="binding site" evidence="3">
    <location>
        <position position="246"/>
    </location>
    <ligand>
        <name>K(+)</name>
        <dbReference type="ChEBI" id="CHEBI:29103"/>
    </ligand>
</feature>
<feature type="binding site" evidence="3">
    <location>
        <position position="247"/>
    </location>
    <ligand>
        <name>K(+)</name>
        <dbReference type="ChEBI" id="CHEBI:29103"/>
    </ligand>
</feature>
<feature type="binding site" evidence="3">
    <location>
        <position position="347"/>
    </location>
    <ligand>
        <name>K(+)</name>
        <dbReference type="ChEBI" id="CHEBI:29103"/>
    </ligand>
</feature>
<feature type="binding site" evidence="3">
    <location>
        <position position="382"/>
    </location>
    <ligand>
        <name>chloride</name>
        <dbReference type="ChEBI" id="CHEBI:17996"/>
    </ligand>
</feature>
<sequence length="396" mass="41189">MANLPPVYIVSTARTPIGSFLGSLSSQTAVQLGSVAIKGAVERAGIKPEDVDEVFFGNVLSAGVGQGPARQCALGAGLPQTVIATTVNKVCASSLKAIILGAQNIMLGTSDIVVAGGTESMSNTPHYLPNLRNGAKYGDQTLVDGVLKDGLTDSFKKDHMGISAELCVDDHDLTREAQDEYAINSYKKAQAATEAGLFTEIVPVEIPGGRGKPAIKVERDDEVKNLNVDKLKAMRPAFKPDGTVTAPNAAPINDGAAAVVLVSEAKLKELNLKPVAKILGWGDAEREPERFTIAPALAIPKAIKHAGLTAEQVEYYEINEAFSAVALANMKILGLNPDQVNVYGGSVAIGHPLGCSGARIVTTLTSVLKERKAKIGAVGICNGGGGASAMVIENLQ</sequence>
<evidence type="ECO:0000250" key="1">
    <source>
        <dbReference type="UniProtKB" id="P24752"/>
    </source>
</evidence>
<evidence type="ECO:0000250" key="2">
    <source>
        <dbReference type="UniProtKB" id="P41338"/>
    </source>
</evidence>
<evidence type="ECO:0000250" key="3">
    <source>
        <dbReference type="UniProtKB" id="Q4WCL5"/>
    </source>
</evidence>
<evidence type="ECO:0000255" key="4">
    <source>
        <dbReference type="PROSITE-ProRule" id="PRU10020"/>
    </source>
</evidence>
<evidence type="ECO:0000269" key="5">
    <source>
    </source>
</evidence>
<evidence type="ECO:0000303" key="6">
    <source>
    </source>
</evidence>
<evidence type="ECO:0000305" key="7"/>
<evidence type="ECO:0000305" key="8">
    <source>
    </source>
</evidence>
<keyword id="KW-0012">Acyltransferase</keyword>
<keyword id="KW-0963">Cytoplasm</keyword>
<keyword id="KW-0444">Lipid biosynthesis</keyword>
<keyword id="KW-0443">Lipid metabolism</keyword>
<keyword id="KW-0479">Metal-binding</keyword>
<keyword id="KW-0630">Potassium</keyword>
<keyword id="KW-1185">Reference proteome</keyword>
<keyword id="KW-0752">Steroid biosynthesis</keyword>
<keyword id="KW-0753">Steroid metabolism</keyword>
<keyword id="KW-0756">Sterol biosynthesis</keyword>
<keyword id="KW-1207">Sterol metabolism</keyword>
<keyword id="KW-0808">Transferase</keyword>
<protein>
    <recommendedName>
        <fullName evidence="6">Acetyl-CoA acetyltransferase ERG10, cytosolic</fullName>
        <ecNumber evidence="8">2.3.1.9</ecNumber>
    </recommendedName>
    <alternativeName>
        <fullName evidence="7">Acetoacetyl-CoA thiolase ERG10</fullName>
        <shortName evidence="7">ACAT</shortName>
    </alternativeName>
    <alternativeName>
        <fullName evidence="7">Cytosolic thiolase ERG10</fullName>
        <shortName evidence="7">CT</shortName>
    </alternativeName>
    <alternativeName>
        <fullName evidence="6">Ergosterol biosynthesis protein 10</fullName>
    </alternativeName>
</protein>
<name>ER10B_GIBZE</name>